<protein>
    <recommendedName>
        <fullName evidence="1">Large ribosomal subunit protein uL11</fullName>
    </recommendedName>
    <alternativeName>
        <fullName evidence="2">50S ribosomal protein L11</fullName>
    </alternativeName>
</protein>
<name>RL11_ACAM1</name>
<keyword id="KW-0488">Methylation</keyword>
<keyword id="KW-1185">Reference proteome</keyword>
<keyword id="KW-0687">Ribonucleoprotein</keyword>
<keyword id="KW-0689">Ribosomal protein</keyword>
<keyword id="KW-0694">RNA-binding</keyword>
<keyword id="KW-0699">rRNA-binding</keyword>
<reference key="1">
    <citation type="journal article" date="2008" name="Proc. Natl. Acad. Sci. U.S.A.">
        <title>Niche adaptation and genome expansion in the chlorophyll d-producing cyanobacterium Acaryochloris marina.</title>
        <authorList>
            <person name="Swingley W.D."/>
            <person name="Chen M."/>
            <person name="Cheung P.C."/>
            <person name="Conrad A.L."/>
            <person name="Dejesa L.C."/>
            <person name="Hao J."/>
            <person name="Honchak B.M."/>
            <person name="Karbach L.E."/>
            <person name="Kurdoglu A."/>
            <person name="Lahiri S."/>
            <person name="Mastrian S.D."/>
            <person name="Miyashita H."/>
            <person name="Page L."/>
            <person name="Ramakrishna P."/>
            <person name="Satoh S."/>
            <person name="Sattley W.M."/>
            <person name="Shimada Y."/>
            <person name="Taylor H.L."/>
            <person name="Tomo T."/>
            <person name="Tsuchiya T."/>
            <person name="Wang Z.T."/>
            <person name="Raymond J."/>
            <person name="Mimuro M."/>
            <person name="Blankenship R.E."/>
            <person name="Touchman J.W."/>
        </authorList>
    </citation>
    <scope>NUCLEOTIDE SEQUENCE [LARGE SCALE GENOMIC DNA]</scope>
    <source>
        <strain>MBIC 11017</strain>
    </source>
</reference>
<proteinExistence type="inferred from homology"/>
<gene>
    <name evidence="1" type="primary">rplK</name>
    <name evidence="1" type="synonym">rpl11</name>
    <name type="ordered locus">AM1_2865</name>
</gene>
<evidence type="ECO:0000255" key="1">
    <source>
        <dbReference type="HAMAP-Rule" id="MF_00736"/>
    </source>
</evidence>
<evidence type="ECO:0000305" key="2"/>
<sequence>MAKKVVAIIKLAIAAGKANPAPPIGPALGQHGVNIMMFCKEYNAKTSDQAGLVVPVEISVYEDRSFTFILKTPPASVLIKKAAGIEKGSGEPNAVQVGQITKAQLQEIAQTKMPDLNANDIEAAMNIVAGTARNMGVAVVD</sequence>
<dbReference type="EMBL" id="CP000828">
    <property type="protein sequence ID" value="ABW27864.1"/>
    <property type="molecule type" value="Genomic_DNA"/>
</dbReference>
<dbReference type="RefSeq" id="WP_010475526.1">
    <property type="nucleotide sequence ID" value="NC_009925.1"/>
</dbReference>
<dbReference type="SMR" id="B0CAC9"/>
<dbReference type="STRING" id="329726.AM1_2865"/>
<dbReference type="KEGG" id="amr:AM1_2865"/>
<dbReference type="eggNOG" id="COG0080">
    <property type="taxonomic scope" value="Bacteria"/>
</dbReference>
<dbReference type="HOGENOM" id="CLU_074237_2_2_3"/>
<dbReference type="OrthoDB" id="9802408at2"/>
<dbReference type="Proteomes" id="UP000000268">
    <property type="component" value="Chromosome"/>
</dbReference>
<dbReference type="GO" id="GO:0022625">
    <property type="term" value="C:cytosolic large ribosomal subunit"/>
    <property type="evidence" value="ECO:0007669"/>
    <property type="project" value="TreeGrafter"/>
</dbReference>
<dbReference type="GO" id="GO:0070180">
    <property type="term" value="F:large ribosomal subunit rRNA binding"/>
    <property type="evidence" value="ECO:0007669"/>
    <property type="project" value="UniProtKB-UniRule"/>
</dbReference>
<dbReference type="GO" id="GO:0003735">
    <property type="term" value="F:structural constituent of ribosome"/>
    <property type="evidence" value="ECO:0007669"/>
    <property type="project" value="InterPro"/>
</dbReference>
<dbReference type="GO" id="GO:0006412">
    <property type="term" value="P:translation"/>
    <property type="evidence" value="ECO:0007669"/>
    <property type="project" value="UniProtKB-UniRule"/>
</dbReference>
<dbReference type="CDD" id="cd00349">
    <property type="entry name" value="Ribosomal_L11"/>
    <property type="match status" value="1"/>
</dbReference>
<dbReference type="FunFam" id="1.10.10.250:FF:000001">
    <property type="entry name" value="50S ribosomal protein L11"/>
    <property type="match status" value="1"/>
</dbReference>
<dbReference type="FunFam" id="3.30.1550.10:FF:000001">
    <property type="entry name" value="50S ribosomal protein L11"/>
    <property type="match status" value="1"/>
</dbReference>
<dbReference type="Gene3D" id="1.10.10.250">
    <property type="entry name" value="Ribosomal protein L11, C-terminal domain"/>
    <property type="match status" value="1"/>
</dbReference>
<dbReference type="Gene3D" id="3.30.1550.10">
    <property type="entry name" value="Ribosomal protein L11/L12, N-terminal domain"/>
    <property type="match status" value="1"/>
</dbReference>
<dbReference type="HAMAP" id="MF_00736">
    <property type="entry name" value="Ribosomal_uL11"/>
    <property type="match status" value="1"/>
</dbReference>
<dbReference type="InterPro" id="IPR000911">
    <property type="entry name" value="Ribosomal_uL11"/>
</dbReference>
<dbReference type="InterPro" id="IPR006519">
    <property type="entry name" value="Ribosomal_uL11_bac-typ"/>
</dbReference>
<dbReference type="InterPro" id="IPR020783">
    <property type="entry name" value="Ribosomal_uL11_C"/>
</dbReference>
<dbReference type="InterPro" id="IPR036769">
    <property type="entry name" value="Ribosomal_uL11_C_sf"/>
</dbReference>
<dbReference type="InterPro" id="IPR020785">
    <property type="entry name" value="Ribosomal_uL11_CS"/>
</dbReference>
<dbReference type="InterPro" id="IPR020784">
    <property type="entry name" value="Ribosomal_uL11_N"/>
</dbReference>
<dbReference type="InterPro" id="IPR036796">
    <property type="entry name" value="Ribosomal_uL11_N_sf"/>
</dbReference>
<dbReference type="NCBIfam" id="TIGR01632">
    <property type="entry name" value="L11_bact"/>
    <property type="match status" value="1"/>
</dbReference>
<dbReference type="PANTHER" id="PTHR11661">
    <property type="entry name" value="60S RIBOSOMAL PROTEIN L12"/>
    <property type="match status" value="1"/>
</dbReference>
<dbReference type="PANTHER" id="PTHR11661:SF1">
    <property type="entry name" value="LARGE RIBOSOMAL SUBUNIT PROTEIN UL11M"/>
    <property type="match status" value="1"/>
</dbReference>
<dbReference type="Pfam" id="PF00298">
    <property type="entry name" value="Ribosomal_L11"/>
    <property type="match status" value="1"/>
</dbReference>
<dbReference type="Pfam" id="PF03946">
    <property type="entry name" value="Ribosomal_L11_N"/>
    <property type="match status" value="1"/>
</dbReference>
<dbReference type="SMART" id="SM00649">
    <property type="entry name" value="RL11"/>
    <property type="match status" value="1"/>
</dbReference>
<dbReference type="SUPFAM" id="SSF54747">
    <property type="entry name" value="Ribosomal L11/L12e N-terminal domain"/>
    <property type="match status" value="1"/>
</dbReference>
<dbReference type="SUPFAM" id="SSF46906">
    <property type="entry name" value="Ribosomal protein L11, C-terminal domain"/>
    <property type="match status" value="1"/>
</dbReference>
<dbReference type="PROSITE" id="PS00359">
    <property type="entry name" value="RIBOSOMAL_L11"/>
    <property type="match status" value="1"/>
</dbReference>
<comment type="function">
    <text evidence="1">Forms part of the ribosomal stalk which helps the ribosome interact with GTP-bound translation factors.</text>
</comment>
<comment type="subunit">
    <text evidence="1">Part of the ribosomal stalk of the 50S ribosomal subunit. Interacts with L10 and the large rRNA to form the base of the stalk. L10 forms an elongated spine to which L12 dimers bind in a sequential fashion forming a multimeric L10(L12)X complex.</text>
</comment>
<comment type="PTM">
    <text evidence="1">One or more lysine residues are methylated.</text>
</comment>
<comment type="similarity">
    <text evidence="1">Belongs to the universal ribosomal protein uL11 family.</text>
</comment>
<accession>B0CAC9</accession>
<feature type="chain" id="PRO_1000083366" description="Large ribosomal subunit protein uL11">
    <location>
        <begin position="1"/>
        <end position="141"/>
    </location>
</feature>
<organism>
    <name type="scientific">Acaryochloris marina (strain MBIC 11017)</name>
    <dbReference type="NCBI Taxonomy" id="329726"/>
    <lineage>
        <taxon>Bacteria</taxon>
        <taxon>Bacillati</taxon>
        <taxon>Cyanobacteriota</taxon>
        <taxon>Cyanophyceae</taxon>
        <taxon>Acaryochloridales</taxon>
        <taxon>Acaryochloridaceae</taxon>
        <taxon>Acaryochloris</taxon>
    </lineage>
</organism>